<name>DAPA_LACP7</name>
<protein>
    <recommendedName>
        <fullName evidence="1">4-hydroxy-tetrahydrodipicolinate synthase</fullName>
        <shortName evidence="1">HTPA synthase</shortName>
        <ecNumber evidence="1">4.3.3.7</ecNumber>
    </recommendedName>
</protein>
<organism>
    <name type="scientific">Lachnoclostridium phytofermentans (strain ATCC 700394 / DSM 18823 / ISDg)</name>
    <name type="common">Clostridium phytofermentans</name>
    <dbReference type="NCBI Taxonomy" id="357809"/>
    <lineage>
        <taxon>Bacteria</taxon>
        <taxon>Bacillati</taxon>
        <taxon>Bacillota</taxon>
        <taxon>Clostridia</taxon>
        <taxon>Lachnospirales</taxon>
        <taxon>Lachnospiraceae</taxon>
    </lineage>
</organism>
<feature type="chain" id="PRO_1000080525" description="4-hydroxy-tetrahydrodipicolinate synthase">
    <location>
        <begin position="1"/>
        <end position="294"/>
    </location>
</feature>
<feature type="active site" description="Proton donor/acceptor" evidence="1">
    <location>
        <position position="135"/>
    </location>
</feature>
<feature type="active site" description="Schiff-base intermediate with substrate" evidence="1">
    <location>
        <position position="164"/>
    </location>
</feature>
<feature type="binding site" evidence="1">
    <location>
        <position position="47"/>
    </location>
    <ligand>
        <name>pyruvate</name>
        <dbReference type="ChEBI" id="CHEBI:15361"/>
    </ligand>
</feature>
<feature type="binding site" evidence="1">
    <location>
        <position position="206"/>
    </location>
    <ligand>
        <name>pyruvate</name>
        <dbReference type="ChEBI" id="CHEBI:15361"/>
    </ligand>
</feature>
<feature type="site" description="Part of a proton relay during catalysis" evidence="1">
    <location>
        <position position="46"/>
    </location>
</feature>
<feature type="site" description="Part of a proton relay during catalysis" evidence="1">
    <location>
        <position position="109"/>
    </location>
</feature>
<comment type="function">
    <text evidence="1">Catalyzes the condensation of (S)-aspartate-beta-semialdehyde [(S)-ASA] and pyruvate to 4-hydroxy-tetrahydrodipicolinate (HTPA).</text>
</comment>
<comment type="catalytic activity">
    <reaction evidence="1">
        <text>L-aspartate 4-semialdehyde + pyruvate = (2S,4S)-4-hydroxy-2,3,4,5-tetrahydrodipicolinate + H2O + H(+)</text>
        <dbReference type="Rhea" id="RHEA:34171"/>
        <dbReference type="ChEBI" id="CHEBI:15361"/>
        <dbReference type="ChEBI" id="CHEBI:15377"/>
        <dbReference type="ChEBI" id="CHEBI:15378"/>
        <dbReference type="ChEBI" id="CHEBI:67139"/>
        <dbReference type="ChEBI" id="CHEBI:537519"/>
        <dbReference type="EC" id="4.3.3.7"/>
    </reaction>
</comment>
<comment type="pathway">
    <text evidence="1">Amino-acid biosynthesis; L-lysine biosynthesis via DAP pathway; (S)-tetrahydrodipicolinate from L-aspartate: step 3/4.</text>
</comment>
<comment type="subunit">
    <text evidence="1">Homotetramer; dimer of dimers.</text>
</comment>
<comment type="subcellular location">
    <subcellularLocation>
        <location evidence="1">Cytoplasm</location>
    </subcellularLocation>
</comment>
<comment type="similarity">
    <text evidence="1">Belongs to the DapA family.</text>
</comment>
<comment type="caution">
    <text evidence="2">Was originally thought to be a dihydrodipicolinate synthase (DHDPS), catalyzing the condensation of (S)-aspartate-beta-semialdehyde [(S)-ASA] and pyruvate to dihydrodipicolinate (DHDP). However, it was shown in E.coli that the product of the enzymatic reaction is not dihydrodipicolinate but in fact (4S)-4-hydroxy-2,3,4,5-tetrahydro-(2S)-dipicolinic acid (HTPA), and that the consecutive dehydration reaction leading to DHDP is not spontaneous but catalyzed by DapB.</text>
</comment>
<proteinExistence type="inferred from homology"/>
<reference key="1">
    <citation type="submission" date="2007-11" db="EMBL/GenBank/DDBJ databases">
        <title>Complete genome sequence of Clostridium phytofermentans ISDg.</title>
        <authorList>
            <person name="Leschine S.B."/>
            <person name="Warnick T.A."/>
            <person name="Blanchard J.L."/>
            <person name="Schnell D.J."/>
            <person name="Petit E.L."/>
            <person name="LaTouf W.G."/>
            <person name="Copeland A."/>
            <person name="Lucas S."/>
            <person name="Lapidus A."/>
            <person name="Barry K."/>
            <person name="Glavina del Rio T."/>
            <person name="Dalin E."/>
            <person name="Tice H."/>
            <person name="Pitluck S."/>
            <person name="Kiss H."/>
            <person name="Brettin T."/>
            <person name="Bruce D."/>
            <person name="Detter J.C."/>
            <person name="Han C."/>
            <person name="Kuske C."/>
            <person name="Schmutz J."/>
            <person name="Larimer F."/>
            <person name="Land M."/>
            <person name="Hauser L."/>
            <person name="Kyrpides N."/>
            <person name="Kim E.A."/>
            <person name="Richardson P."/>
        </authorList>
    </citation>
    <scope>NUCLEOTIDE SEQUENCE [LARGE SCALE GENOMIC DNA]</scope>
    <source>
        <strain>ATCC 700394 / DSM 18823 / ISDg</strain>
    </source>
</reference>
<evidence type="ECO:0000255" key="1">
    <source>
        <dbReference type="HAMAP-Rule" id="MF_00418"/>
    </source>
</evidence>
<evidence type="ECO:0000305" key="2"/>
<gene>
    <name evidence="1" type="primary">dapA</name>
    <name type="ordered locus">Cphy_3482</name>
</gene>
<accession>A9KHY6</accession>
<keyword id="KW-0028">Amino-acid biosynthesis</keyword>
<keyword id="KW-0963">Cytoplasm</keyword>
<keyword id="KW-0220">Diaminopimelate biosynthesis</keyword>
<keyword id="KW-0456">Lyase</keyword>
<keyword id="KW-0457">Lysine biosynthesis</keyword>
<keyword id="KW-1185">Reference proteome</keyword>
<keyword id="KW-0704">Schiff base</keyword>
<sequence length="294" mass="31524">MAIFTGAGVAIVTPFKENREVNYEKLGELIDFQINNGTDSIIICGTTGESSTLTHEEHIECIRFAIEYTKKRVPVIAGTGSNCTETAIYLSKEAQVAGADAVLLVTPYYNKATQKGLIEHFTAIAKSIDLPVMLYNVPSRTGCNILPGTAATLVNTVDNIVAMKEASSNIAQVAELAHTCEGKLDIYSGCDDSIVPVMSLGGLGVVSVLSNIAPRQTHDIVAKFLEGDTKGSLDLQLEYLPVINALFSEVNPIPVKKALNLMGFEVGPLRSPLTEMEDAHAKILADEMKKVGLI</sequence>
<dbReference type="EC" id="4.3.3.7" evidence="1"/>
<dbReference type="EMBL" id="CP000885">
    <property type="protein sequence ID" value="ABX43833.1"/>
    <property type="molecule type" value="Genomic_DNA"/>
</dbReference>
<dbReference type="RefSeq" id="WP_012201481.1">
    <property type="nucleotide sequence ID" value="NC_010001.1"/>
</dbReference>
<dbReference type="SMR" id="A9KHY6"/>
<dbReference type="STRING" id="357809.Cphy_3482"/>
<dbReference type="KEGG" id="cpy:Cphy_3482"/>
<dbReference type="eggNOG" id="COG0329">
    <property type="taxonomic scope" value="Bacteria"/>
</dbReference>
<dbReference type="HOGENOM" id="CLU_049343_7_1_9"/>
<dbReference type="OrthoDB" id="9782828at2"/>
<dbReference type="UniPathway" id="UPA00034">
    <property type="reaction ID" value="UER00017"/>
</dbReference>
<dbReference type="Proteomes" id="UP000000370">
    <property type="component" value="Chromosome"/>
</dbReference>
<dbReference type="GO" id="GO:0005829">
    <property type="term" value="C:cytosol"/>
    <property type="evidence" value="ECO:0007669"/>
    <property type="project" value="TreeGrafter"/>
</dbReference>
<dbReference type="GO" id="GO:0008840">
    <property type="term" value="F:4-hydroxy-tetrahydrodipicolinate synthase activity"/>
    <property type="evidence" value="ECO:0007669"/>
    <property type="project" value="UniProtKB-UniRule"/>
</dbReference>
<dbReference type="GO" id="GO:0019877">
    <property type="term" value="P:diaminopimelate biosynthetic process"/>
    <property type="evidence" value="ECO:0007669"/>
    <property type="project" value="UniProtKB-UniRule"/>
</dbReference>
<dbReference type="GO" id="GO:0009089">
    <property type="term" value="P:lysine biosynthetic process via diaminopimelate"/>
    <property type="evidence" value="ECO:0007669"/>
    <property type="project" value="UniProtKB-UniRule"/>
</dbReference>
<dbReference type="CDD" id="cd00950">
    <property type="entry name" value="DHDPS"/>
    <property type="match status" value="1"/>
</dbReference>
<dbReference type="Gene3D" id="3.20.20.70">
    <property type="entry name" value="Aldolase class I"/>
    <property type="match status" value="1"/>
</dbReference>
<dbReference type="HAMAP" id="MF_00418">
    <property type="entry name" value="DapA"/>
    <property type="match status" value="1"/>
</dbReference>
<dbReference type="InterPro" id="IPR013785">
    <property type="entry name" value="Aldolase_TIM"/>
</dbReference>
<dbReference type="InterPro" id="IPR005263">
    <property type="entry name" value="DapA"/>
</dbReference>
<dbReference type="InterPro" id="IPR002220">
    <property type="entry name" value="DapA-like"/>
</dbReference>
<dbReference type="InterPro" id="IPR020625">
    <property type="entry name" value="Schiff_base-form_aldolases_AS"/>
</dbReference>
<dbReference type="InterPro" id="IPR020624">
    <property type="entry name" value="Schiff_base-form_aldolases_CS"/>
</dbReference>
<dbReference type="NCBIfam" id="TIGR00674">
    <property type="entry name" value="dapA"/>
    <property type="match status" value="1"/>
</dbReference>
<dbReference type="PANTHER" id="PTHR12128:SF66">
    <property type="entry name" value="4-HYDROXY-2-OXOGLUTARATE ALDOLASE, MITOCHONDRIAL"/>
    <property type="match status" value="1"/>
</dbReference>
<dbReference type="PANTHER" id="PTHR12128">
    <property type="entry name" value="DIHYDRODIPICOLINATE SYNTHASE"/>
    <property type="match status" value="1"/>
</dbReference>
<dbReference type="Pfam" id="PF00701">
    <property type="entry name" value="DHDPS"/>
    <property type="match status" value="1"/>
</dbReference>
<dbReference type="PIRSF" id="PIRSF001365">
    <property type="entry name" value="DHDPS"/>
    <property type="match status" value="1"/>
</dbReference>
<dbReference type="PRINTS" id="PR00146">
    <property type="entry name" value="DHPICSNTHASE"/>
</dbReference>
<dbReference type="SMART" id="SM01130">
    <property type="entry name" value="DHDPS"/>
    <property type="match status" value="1"/>
</dbReference>
<dbReference type="SUPFAM" id="SSF51569">
    <property type="entry name" value="Aldolase"/>
    <property type="match status" value="1"/>
</dbReference>
<dbReference type="PROSITE" id="PS00665">
    <property type="entry name" value="DHDPS_1"/>
    <property type="match status" value="1"/>
</dbReference>
<dbReference type="PROSITE" id="PS00666">
    <property type="entry name" value="DHDPS_2"/>
    <property type="match status" value="1"/>
</dbReference>